<evidence type="ECO:0000255" key="1">
    <source>
        <dbReference type="HAMAP-Rule" id="MF_01086"/>
    </source>
</evidence>
<protein>
    <recommendedName>
        <fullName evidence="1">UPF0284 protein SYNW1869</fullName>
    </recommendedName>
</protein>
<proteinExistence type="inferred from homology"/>
<feature type="chain" id="PRO_0000151045" description="UPF0284 protein SYNW1869">
    <location>
        <begin position="1"/>
        <end position="394"/>
    </location>
</feature>
<organism>
    <name type="scientific">Parasynechococcus marenigrum (strain WH8102)</name>
    <dbReference type="NCBI Taxonomy" id="84588"/>
    <lineage>
        <taxon>Bacteria</taxon>
        <taxon>Bacillati</taxon>
        <taxon>Cyanobacteriota</taxon>
        <taxon>Cyanophyceae</taxon>
        <taxon>Synechococcales</taxon>
        <taxon>Prochlorococcaceae</taxon>
        <taxon>Parasynechococcus</taxon>
        <taxon>Parasynechococcus marenigrum</taxon>
    </lineage>
</organism>
<reference key="1">
    <citation type="journal article" date="2003" name="Nature">
        <title>The genome of a motile marine Synechococcus.</title>
        <authorList>
            <person name="Palenik B."/>
            <person name="Brahamsha B."/>
            <person name="Larimer F.W."/>
            <person name="Land M.L."/>
            <person name="Hauser L."/>
            <person name="Chain P."/>
            <person name="Lamerdin J.E."/>
            <person name="Regala W."/>
            <person name="Allen E.E."/>
            <person name="McCarren J."/>
            <person name="Paulsen I.T."/>
            <person name="Dufresne A."/>
            <person name="Partensky F."/>
            <person name="Webb E.A."/>
            <person name="Waterbury J."/>
        </authorList>
    </citation>
    <scope>NUCLEOTIDE SEQUENCE [LARGE SCALE GENOMIC DNA]</scope>
    <source>
        <strain>WH8102</strain>
    </source>
</reference>
<dbReference type="EMBL" id="BX569694">
    <property type="protein sequence ID" value="CAE08384.1"/>
    <property type="molecule type" value="Genomic_DNA"/>
</dbReference>
<dbReference type="RefSeq" id="WP_011128727.1">
    <property type="nucleotide sequence ID" value="NC_005070.1"/>
</dbReference>
<dbReference type="SMR" id="P59921"/>
<dbReference type="STRING" id="84588.SYNW1869"/>
<dbReference type="KEGG" id="syw:SYNW1869"/>
<dbReference type="eggNOG" id="COG2038">
    <property type="taxonomic scope" value="Bacteria"/>
</dbReference>
<dbReference type="HOGENOM" id="CLU_053134_1_0_3"/>
<dbReference type="Proteomes" id="UP000001422">
    <property type="component" value="Chromosome"/>
</dbReference>
<dbReference type="GO" id="GO:0008939">
    <property type="term" value="F:nicotinate-nucleotide-dimethylbenzimidazole phosphoribosyltransferase activity"/>
    <property type="evidence" value="ECO:0007669"/>
    <property type="project" value="InterPro"/>
</dbReference>
<dbReference type="CDD" id="cd02439">
    <property type="entry name" value="DMB-PRT_CobT"/>
    <property type="match status" value="1"/>
</dbReference>
<dbReference type="Gene3D" id="3.40.50.10210">
    <property type="match status" value="1"/>
</dbReference>
<dbReference type="HAMAP" id="MF_01086">
    <property type="entry name" value="UPF0284"/>
    <property type="match status" value="1"/>
</dbReference>
<dbReference type="InterPro" id="IPR003200">
    <property type="entry name" value="Nict_dMeBzImd_PRibTrfase"/>
</dbReference>
<dbReference type="InterPro" id="IPR002805">
    <property type="entry name" value="Nict_dMeBzImd_PRibTrfase_arc"/>
</dbReference>
<dbReference type="InterPro" id="IPR036087">
    <property type="entry name" value="Nict_dMeBzImd_PRibTrfase_sf"/>
</dbReference>
<dbReference type="NCBIfam" id="NF003369">
    <property type="entry name" value="PRK04447.1-2"/>
    <property type="match status" value="1"/>
</dbReference>
<dbReference type="PANTHER" id="PTHR38811">
    <property type="match status" value="1"/>
</dbReference>
<dbReference type="PANTHER" id="PTHR38811:SF1">
    <property type="entry name" value="UPF0284 PROTEIN SLL1500"/>
    <property type="match status" value="1"/>
</dbReference>
<dbReference type="SUPFAM" id="SSF52733">
    <property type="entry name" value="Nicotinate mononucleotide:5,6-dimethylbenzimidazole phosphoribosyltransferase (CobT)"/>
    <property type="match status" value="1"/>
</dbReference>
<gene>
    <name type="ordered locus">SYNW1869</name>
</gene>
<accession>P59921</accession>
<sequence>MLPLTLSDLEGLPLGCSIVGSRCSRQQLQAHLEPWCQGDSSFDLLLLLAATRTAEREGISAAGATAASRRLTALADADLLLHGPGKPRRWPLPPLPAGVSPALLSHVALQRLPMQPLVAALGLEHEATFPHLRLESPQAGPARCLSTGRAMDPERVERLWRKGMRLGAQLRRPLLLAECVPGGTTTAQAVLKALGVPVNGLISGSARQPPQELKRHLVEQGLCRAQLPAWPSPQAVLAAVGDPFQAVAAGVLVSAQQPVLLGGGSQMAAVATLALASLPDQERKVLADRVLLGSTAWLALEWIRGGDMPALGCLLDEVGHRFGVSLAGLASGLRFHASRQPALRDYEDGFVKEGVGAGALLLLAQLQGQHSEALVEGCERALDQLLASAVASEV</sequence>
<name>Y1869_PARMW</name>
<comment type="similarity">
    <text evidence="1">Belongs to the UPF0284 family.</text>
</comment>